<gene>
    <name evidence="1" type="primary">nucS</name>
    <name type="ordered locus">BLA_0628</name>
</gene>
<protein>
    <recommendedName>
        <fullName evidence="1">Endonuclease NucS</fullName>
        <ecNumber evidence="1">3.1.-.-</ecNumber>
    </recommendedName>
</protein>
<reference key="1">
    <citation type="journal article" date="2009" name="J. Bacteriol.">
        <title>Genome sequence of the probiotic bacterium Bifidobacterium animalis subsp. lactis AD011.</title>
        <authorList>
            <person name="Kim J.F."/>
            <person name="Jeong H."/>
            <person name="Yu D.S."/>
            <person name="Choi S.-H."/>
            <person name="Hur C.-G."/>
            <person name="Park M.-S."/>
            <person name="Yoon S.H."/>
            <person name="Kim D.-W."/>
            <person name="Ji G.E."/>
            <person name="Park H.-S."/>
            <person name="Oh T.K."/>
        </authorList>
    </citation>
    <scope>NUCLEOTIDE SEQUENCE [LARGE SCALE GENOMIC DNA]</scope>
    <source>
        <strain>AD011</strain>
    </source>
</reference>
<evidence type="ECO:0000255" key="1">
    <source>
        <dbReference type="HAMAP-Rule" id="MF_00722"/>
    </source>
</evidence>
<accession>B8DWS0</accession>
<feature type="chain" id="PRO_1000198194" description="Endonuclease NucS">
    <location>
        <begin position="1"/>
        <end position="234"/>
    </location>
</feature>
<keyword id="KW-0963">Cytoplasm</keyword>
<keyword id="KW-0238">DNA-binding</keyword>
<keyword id="KW-0255">Endonuclease</keyword>
<keyword id="KW-0378">Hydrolase</keyword>
<keyword id="KW-0540">Nuclease</keyword>
<keyword id="KW-1185">Reference proteome</keyword>
<organism>
    <name type="scientific">Bifidobacterium animalis subsp. lactis (strain AD011)</name>
    <dbReference type="NCBI Taxonomy" id="442563"/>
    <lineage>
        <taxon>Bacteria</taxon>
        <taxon>Bacillati</taxon>
        <taxon>Actinomycetota</taxon>
        <taxon>Actinomycetes</taxon>
        <taxon>Bifidobacteriales</taxon>
        <taxon>Bifidobacteriaceae</taxon>
        <taxon>Bifidobacterium</taxon>
    </lineage>
</organism>
<sequence length="234" mass="25928">MRIIVADCCAEYTGRLSASLPLAKRVLLIKADNSLLIFSEIGSYKPLNWMLSPCTIKDITPQDADDDPATPTPEKIIRVQSTKTNDVLEVTLQHIYSDETHDLGTDPGLRKDGVEDHLQRYLAEQIERIGEGAKLVRREYPTAIGPVDIMAIDADGTHVAIEIKRHGGIDGVEQLTRYCELLNRDPLLAPVRGIFAAQTITPQAQVLAKDRGFDCLLLDYDDMKGTDDGALRLF</sequence>
<dbReference type="EC" id="3.1.-.-" evidence="1"/>
<dbReference type="EMBL" id="CP001213">
    <property type="protein sequence ID" value="ACL28921.1"/>
    <property type="molecule type" value="Genomic_DNA"/>
</dbReference>
<dbReference type="RefSeq" id="WP_004219182.1">
    <property type="nucleotide sequence ID" value="NC_011835.1"/>
</dbReference>
<dbReference type="SMR" id="B8DWS0"/>
<dbReference type="STRING" id="442563.BLA_0628"/>
<dbReference type="GeneID" id="29696422"/>
<dbReference type="KEGG" id="bla:BLA_0628"/>
<dbReference type="PATRIC" id="fig|442563.4.peg.659"/>
<dbReference type="HOGENOM" id="CLU_069350_0_0_11"/>
<dbReference type="Proteomes" id="UP000002456">
    <property type="component" value="Chromosome"/>
</dbReference>
<dbReference type="GO" id="GO:0005737">
    <property type="term" value="C:cytoplasm"/>
    <property type="evidence" value="ECO:0007669"/>
    <property type="project" value="UniProtKB-SubCell"/>
</dbReference>
<dbReference type="GO" id="GO:0003677">
    <property type="term" value="F:DNA binding"/>
    <property type="evidence" value="ECO:0007669"/>
    <property type="project" value="UniProtKB-KW"/>
</dbReference>
<dbReference type="GO" id="GO:0000014">
    <property type="term" value="F:single-stranded DNA endodeoxyribonuclease activity"/>
    <property type="evidence" value="ECO:0007669"/>
    <property type="project" value="UniProtKB-UniRule"/>
</dbReference>
<dbReference type="CDD" id="cd22341">
    <property type="entry name" value="NucS-like"/>
    <property type="match status" value="1"/>
</dbReference>
<dbReference type="Gene3D" id="2.70.180.20">
    <property type="match status" value="1"/>
</dbReference>
<dbReference type="Gene3D" id="3.40.1350.10">
    <property type="match status" value="1"/>
</dbReference>
<dbReference type="HAMAP" id="MF_00722">
    <property type="entry name" value="NucS"/>
    <property type="match status" value="1"/>
</dbReference>
<dbReference type="InterPro" id="IPR002793">
    <property type="entry name" value="Endonuclease_NucS"/>
</dbReference>
<dbReference type="InterPro" id="IPR048301">
    <property type="entry name" value="NucS_C"/>
</dbReference>
<dbReference type="InterPro" id="IPR048302">
    <property type="entry name" value="NucS_N"/>
</dbReference>
<dbReference type="InterPro" id="IPR049173">
    <property type="entry name" value="NucS_N_sf"/>
</dbReference>
<dbReference type="InterPro" id="IPR011335">
    <property type="entry name" value="Restrct_endonuc-II-like"/>
</dbReference>
<dbReference type="InterPro" id="IPR011856">
    <property type="entry name" value="tRNA_endonuc-like_dom_sf"/>
</dbReference>
<dbReference type="NCBIfam" id="NF002876">
    <property type="entry name" value="PRK03298.1"/>
    <property type="match status" value="1"/>
</dbReference>
<dbReference type="PANTHER" id="PTHR38814">
    <property type="entry name" value="ENDONUCLEASE NUCS"/>
    <property type="match status" value="1"/>
</dbReference>
<dbReference type="PANTHER" id="PTHR38814:SF1">
    <property type="entry name" value="ENDONUCLEASE NUCS"/>
    <property type="match status" value="1"/>
</dbReference>
<dbReference type="Pfam" id="PF01939">
    <property type="entry name" value="NucS_C"/>
    <property type="match status" value="1"/>
</dbReference>
<dbReference type="Pfam" id="PF21003">
    <property type="entry name" value="NucS_N"/>
    <property type="match status" value="1"/>
</dbReference>
<dbReference type="SUPFAM" id="SSF52980">
    <property type="entry name" value="Restriction endonuclease-like"/>
    <property type="match status" value="1"/>
</dbReference>
<proteinExistence type="inferred from homology"/>
<name>NUCS_BIFA0</name>
<comment type="function">
    <text evidence="1">Cleaves both 3' and 5' ssDNA extremities of branched DNA structures.</text>
</comment>
<comment type="subcellular location">
    <subcellularLocation>
        <location evidence="1">Cytoplasm</location>
    </subcellularLocation>
</comment>
<comment type="similarity">
    <text evidence="1">Belongs to the NucS endonuclease family.</text>
</comment>